<sequence>MTLRLSAIDLRHSNGTLALRGLDLSIERGERVAIIGPSGAGKTTLLNLLASALPPSAGQLEVLGVNPWQLSSRQRQQLRSRIALIHQAPPLPARQRVVTAVSAGKLGQWGLGKSLLNLLHPLDVPGARAVLARLDLADKLFERCQQLSGGQLQRVGIARALYQAPELLLADEPVSAMDPRLADHTLALLCQHAIEHNVTLVASLHAVELALAHFPRIIGVRDGRIHFDLPAGEVERQHLDTLYANEQLSPQQVCEVAETVWAPRC</sequence>
<keyword id="KW-0067">ATP-binding</keyword>
<keyword id="KW-0997">Cell inner membrane</keyword>
<keyword id="KW-1003">Cell membrane</keyword>
<keyword id="KW-0472">Membrane</keyword>
<keyword id="KW-0547">Nucleotide-binding</keyword>
<keyword id="KW-0918">Phosphonate transport</keyword>
<keyword id="KW-1185">Reference proteome</keyword>
<keyword id="KW-1278">Translocase</keyword>
<keyword id="KW-0813">Transport</keyword>
<reference key="1">
    <citation type="journal article" date="2003" name="Proc. Natl. Acad. Sci. U.S.A.">
        <title>The complete genome sequence of the Arabidopsis and tomato pathogen Pseudomonas syringae pv. tomato DC3000.</title>
        <authorList>
            <person name="Buell C.R."/>
            <person name="Joardar V."/>
            <person name="Lindeberg M."/>
            <person name="Selengut J."/>
            <person name="Paulsen I.T."/>
            <person name="Gwinn M.L."/>
            <person name="Dodson R.J."/>
            <person name="DeBoy R.T."/>
            <person name="Durkin A.S."/>
            <person name="Kolonay J.F."/>
            <person name="Madupu R."/>
            <person name="Daugherty S.C."/>
            <person name="Brinkac L.M."/>
            <person name="Beanan M.J."/>
            <person name="Haft D.H."/>
            <person name="Nelson W.C."/>
            <person name="Davidsen T.M."/>
            <person name="Zafar N."/>
            <person name="Zhou L."/>
            <person name="Liu J."/>
            <person name="Yuan Q."/>
            <person name="Khouri H.M."/>
            <person name="Fedorova N.B."/>
            <person name="Tran B."/>
            <person name="Russell D."/>
            <person name="Berry K.J."/>
            <person name="Utterback T.R."/>
            <person name="Van Aken S.E."/>
            <person name="Feldblyum T.V."/>
            <person name="D'Ascenzo M."/>
            <person name="Deng W.-L."/>
            <person name="Ramos A.R."/>
            <person name="Alfano J.R."/>
            <person name="Cartinhour S."/>
            <person name="Chatterjee A.K."/>
            <person name="Delaney T.P."/>
            <person name="Lazarowitz S.G."/>
            <person name="Martin G.B."/>
            <person name="Schneider D.J."/>
            <person name="Tang X."/>
            <person name="Bender C.L."/>
            <person name="White O."/>
            <person name="Fraser C.M."/>
            <person name="Collmer A."/>
        </authorList>
    </citation>
    <scope>NUCLEOTIDE SEQUENCE [LARGE SCALE GENOMIC DNA]</scope>
    <source>
        <strain>ATCC BAA-871 / DC3000</strain>
    </source>
</reference>
<feature type="chain" id="PRO_0000092721" description="Phosphonates import ATP-binding protein PhnC 1">
    <location>
        <begin position="1"/>
        <end position="265"/>
    </location>
</feature>
<feature type="domain" description="ABC transporter" evidence="1">
    <location>
        <begin position="3"/>
        <end position="247"/>
    </location>
</feature>
<feature type="binding site" evidence="1">
    <location>
        <begin position="36"/>
        <end position="43"/>
    </location>
    <ligand>
        <name>ATP</name>
        <dbReference type="ChEBI" id="CHEBI:30616"/>
    </ligand>
</feature>
<proteinExistence type="inferred from homology"/>
<comment type="function">
    <text evidence="1">Part of the ABC transporter complex PhnCDE involved in phosphonates import. Responsible for energy coupling to the transport system.</text>
</comment>
<comment type="catalytic activity">
    <reaction evidence="1">
        <text>phosphonate(out) + ATP + H2O = phosphonate(in) + ADP + phosphate + H(+)</text>
        <dbReference type="Rhea" id="RHEA:18065"/>
        <dbReference type="ChEBI" id="CHEBI:15377"/>
        <dbReference type="ChEBI" id="CHEBI:15378"/>
        <dbReference type="ChEBI" id="CHEBI:16215"/>
        <dbReference type="ChEBI" id="CHEBI:30616"/>
        <dbReference type="ChEBI" id="CHEBI:43474"/>
        <dbReference type="ChEBI" id="CHEBI:456216"/>
        <dbReference type="EC" id="7.3.2.2"/>
    </reaction>
</comment>
<comment type="subunit">
    <text evidence="1">The complex is composed of two ATP-binding proteins (PhnC), two transmembrane proteins (PhnE) and a solute-binding protein (PhnD).</text>
</comment>
<comment type="subcellular location">
    <subcellularLocation>
        <location evidence="1">Cell inner membrane</location>
        <topology evidence="1">Peripheral membrane protein</topology>
    </subcellularLocation>
</comment>
<comment type="similarity">
    <text evidence="1">Belongs to the ABC transporter superfamily. Phosphonates importer (TC 3.A.1.9.1) family.</text>
</comment>
<name>PHNC1_PSESM</name>
<gene>
    <name evidence="1" type="primary">phnC1</name>
    <name type="ordered locus">PSPTO_0790</name>
</gene>
<organism>
    <name type="scientific">Pseudomonas syringae pv. tomato (strain ATCC BAA-871 / DC3000)</name>
    <dbReference type="NCBI Taxonomy" id="223283"/>
    <lineage>
        <taxon>Bacteria</taxon>
        <taxon>Pseudomonadati</taxon>
        <taxon>Pseudomonadota</taxon>
        <taxon>Gammaproteobacteria</taxon>
        <taxon>Pseudomonadales</taxon>
        <taxon>Pseudomonadaceae</taxon>
        <taxon>Pseudomonas</taxon>
    </lineage>
</organism>
<dbReference type="EC" id="7.3.2.2" evidence="1"/>
<dbReference type="EMBL" id="AE016853">
    <property type="protein sequence ID" value="AAO54332.1"/>
    <property type="molecule type" value="Genomic_DNA"/>
</dbReference>
<dbReference type="RefSeq" id="NP_790637.1">
    <property type="nucleotide sequence ID" value="NC_004578.1"/>
</dbReference>
<dbReference type="RefSeq" id="WP_011103284.1">
    <property type="nucleotide sequence ID" value="NC_004578.1"/>
</dbReference>
<dbReference type="SMR" id="Q889G0"/>
<dbReference type="STRING" id="223283.PSPTO_0790"/>
<dbReference type="GeneID" id="1182415"/>
<dbReference type="KEGG" id="pst:PSPTO_0790"/>
<dbReference type="PATRIC" id="fig|223283.9.peg.803"/>
<dbReference type="eggNOG" id="COG3638">
    <property type="taxonomic scope" value="Bacteria"/>
</dbReference>
<dbReference type="HOGENOM" id="CLU_000604_1_22_6"/>
<dbReference type="OrthoDB" id="9802264at2"/>
<dbReference type="PhylomeDB" id="Q889G0"/>
<dbReference type="Proteomes" id="UP000002515">
    <property type="component" value="Chromosome"/>
</dbReference>
<dbReference type="GO" id="GO:0005886">
    <property type="term" value="C:plasma membrane"/>
    <property type="evidence" value="ECO:0007669"/>
    <property type="project" value="UniProtKB-SubCell"/>
</dbReference>
<dbReference type="GO" id="GO:0015416">
    <property type="term" value="F:ABC-type phosphonate transporter activity"/>
    <property type="evidence" value="ECO:0007669"/>
    <property type="project" value="UniProtKB-EC"/>
</dbReference>
<dbReference type="GO" id="GO:0005524">
    <property type="term" value="F:ATP binding"/>
    <property type="evidence" value="ECO:0007669"/>
    <property type="project" value="UniProtKB-KW"/>
</dbReference>
<dbReference type="GO" id="GO:0016887">
    <property type="term" value="F:ATP hydrolysis activity"/>
    <property type="evidence" value="ECO:0007669"/>
    <property type="project" value="InterPro"/>
</dbReference>
<dbReference type="Gene3D" id="3.40.50.300">
    <property type="entry name" value="P-loop containing nucleotide triphosphate hydrolases"/>
    <property type="match status" value="1"/>
</dbReference>
<dbReference type="InterPro" id="IPR003593">
    <property type="entry name" value="AAA+_ATPase"/>
</dbReference>
<dbReference type="InterPro" id="IPR003439">
    <property type="entry name" value="ABC_transporter-like_ATP-bd"/>
</dbReference>
<dbReference type="InterPro" id="IPR017871">
    <property type="entry name" value="ABC_transporter-like_CS"/>
</dbReference>
<dbReference type="InterPro" id="IPR050086">
    <property type="entry name" value="MetN_ABC_transporter-like"/>
</dbReference>
<dbReference type="InterPro" id="IPR027417">
    <property type="entry name" value="P-loop_NTPase"/>
</dbReference>
<dbReference type="PANTHER" id="PTHR43166">
    <property type="entry name" value="AMINO ACID IMPORT ATP-BINDING PROTEIN"/>
    <property type="match status" value="1"/>
</dbReference>
<dbReference type="PANTHER" id="PTHR43166:SF6">
    <property type="entry name" value="PHOSPHONATES IMPORT ATP-BINDING PROTEIN PHNC"/>
    <property type="match status" value="1"/>
</dbReference>
<dbReference type="Pfam" id="PF00005">
    <property type="entry name" value="ABC_tran"/>
    <property type="match status" value="1"/>
</dbReference>
<dbReference type="SMART" id="SM00382">
    <property type="entry name" value="AAA"/>
    <property type="match status" value="1"/>
</dbReference>
<dbReference type="SUPFAM" id="SSF52540">
    <property type="entry name" value="P-loop containing nucleoside triphosphate hydrolases"/>
    <property type="match status" value="1"/>
</dbReference>
<dbReference type="PROSITE" id="PS00211">
    <property type="entry name" value="ABC_TRANSPORTER_1"/>
    <property type="match status" value="1"/>
</dbReference>
<dbReference type="PROSITE" id="PS50893">
    <property type="entry name" value="ABC_TRANSPORTER_2"/>
    <property type="match status" value="1"/>
</dbReference>
<dbReference type="PROSITE" id="PS51249">
    <property type="entry name" value="PHNC"/>
    <property type="match status" value="1"/>
</dbReference>
<evidence type="ECO:0000255" key="1">
    <source>
        <dbReference type="HAMAP-Rule" id="MF_01713"/>
    </source>
</evidence>
<accession>Q889G0</accession>
<protein>
    <recommendedName>
        <fullName evidence="1">Phosphonates import ATP-binding protein PhnC 1</fullName>
        <ecNumber evidence="1">7.3.2.2</ecNumber>
    </recommendedName>
</protein>